<protein>
    <recommendedName>
        <fullName evidence="13">Polyketide synthase Pks13</fullName>
        <ecNumber evidence="5 9">2.3.1.-</ecNumber>
    </recommendedName>
</protein>
<reference key="1">
    <citation type="journal article" date="1998" name="Nature">
        <title>Deciphering the biology of Mycobacterium tuberculosis from the complete genome sequence.</title>
        <authorList>
            <person name="Cole S.T."/>
            <person name="Brosch R."/>
            <person name="Parkhill J."/>
            <person name="Garnier T."/>
            <person name="Churcher C.M."/>
            <person name="Harris D.E."/>
            <person name="Gordon S.V."/>
            <person name="Eiglmeier K."/>
            <person name="Gas S."/>
            <person name="Barry C.E. III"/>
            <person name="Tekaia F."/>
            <person name="Badcock K."/>
            <person name="Basham D."/>
            <person name="Brown D."/>
            <person name="Chillingworth T."/>
            <person name="Connor R."/>
            <person name="Davies R.M."/>
            <person name="Devlin K."/>
            <person name="Feltwell T."/>
            <person name="Gentles S."/>
            <person name="Hamlin N."/>
            <person name="Holroyd S."/>
            <person name="Hornsby T."/>
            <person name="Jagels K."/>
            <person name="Krogh A."/>
            <person name="McLean J."/>
            <person name="Moule S."/>
            <person name="Murphy L.D."/>
            <person name="Oliver S."/>
            <person name="Osborne J."/>
            <person name="Quail M.A."/>
            <person name="Rajandream M.A."/>
            <person name="Rogers J."/>
            <person name="Rutter S."/>
            <person name="Seeger K."/>
            <person name="Skelton S."/>
            <person name="Squares S."/>
            <person name="Squares R."/>
            <person name="Sulston J.E."/>
            <person name="Taylor K."/>
            <person name="Whitehead S."/>
            <person name="Barrell B.G."/>
        </authorList>
    </citation>
    <scope>NUCLEOTIDE SEQUENCE [LARGE SCALE GENOMIC DNA]</scope>
    <source>
        <strain>ATCC 25618 / H37Rv</strain>
    </source>
</reference>
<reference key="2">
    <citation type="journal article" date="2006" name="Proc. Natl. Acad. Sci. U.S.A.">
        <title>The nonredundant roles of two 4'-phosphopantetheinyl transferases in vital processes of Mycobacteria.</title>
        <authorList>
            <person name="Chalut C."/>
            <person name="Botella L."/>
            <person name="de Sousa-D'Auria C."/>
            <person name="Houssin C."/>
            <person name="Guilhot C."/>
        </authorList>
    </citation>
    <scope>PHOSPHOPANTETHEINYLATION BY PPTT</scope>
</reference>
<reference key="3">
    <citation type="journal article" date="2009" name="J. Biol. Chem.">
        <title>The Pks13/FadD32 crosstalk for the biosynthesis of mycolic acids in Mycobacterium tuberculosis.</title>
        <authorList>
            <person name="Gavalda S."/>
            <person name="Leger M."/>
            <person name="van der Rest B."/>
            <person name="Stella A."/>
            <person name="Bardou F."/>
            <person name="Montrozier H."/>
            <person name="Chalut C."/>
            <person name="Burlet-Schiltz O."/>
            <person name="Marrakchi H."/>
            <person name="Daffe M."/>
            <person name="Quemard A."/>
        </authorList>
    </citation>
    <scope>FUNCTION</scope>
    <scope>REACTION MECHANISM</scope>
    <scope>ACTIVITY REGULATION</scope>
    <scope>PATHWAY</scope>
    <scope>DOMAIN</scope>
    <scope>PHOSPHOPANTETHEINYLATION AT SER-55 AND SER-1266</scope>
    <source>
        <strain>H37Rv</strain>
    </source>
</reference>
<reference key="4">
    <citation type="journal article" date="2009" name="Chem. Biol.">
        <title>The dual function of the Mycobacterium tuberculosis FadD32 required for mycolic acid biosynthesis.</title>
        <authorList>
            <person name="Leger M."/>
            <person name="Gavalda S."/>
            <person name="Guillet V."/>
            <person name="van der Rest B."/>
            <person name="Slama N."/>
            <person name="Montrozier H."/>
            <person name="Mourey L."/>
            <person name="Quemard A."/>
            <person name="Daffe M."/>
            <person name="Marrakchi H."/>
        </authorList>
    </citation>
    <scope>FUNCTION</scope>
</reference>
<reference key="5">
    <citation type="journal article" date="2011" name="Mol. Cell. Proteomics">
        <title>Proteogenomic analysis of Mycobacterium tuberculosis by high resolution mass spectrometry.</title>
        <authorList>
            <person name="Kelkar D.S."/>
            <person name="Kumar D."/>
            <person name="Kumar P."/>
            <person name="Balakrishnan L."/>
            <person name="Muthusamy B."/>
            <person name="Yadav A.K."/>
            <person name="Shrivastava P."/>
            <person name="Marimuthu A."/>
            <person name="Anand S."/>
            <person name="Sundaram H."/>
            <person name="Kingsbury R."/>
            <person name="Harsha H.C."/>
            <person name="Nair B."/>
            <person name="Prasad T.S."/>
            <person name="Chauhan D.S."/>
            <person name="Katoch K."/>
            <person name="Katoch V.M."/>
            <person name="Kumar P."/>
            <person name="Chaerkady R."/>
            <person name="Ramachandran S."/>
            <person name="Dash D."/>
            <person name="Pandey A."/>
        </authorList>
    </citation>
    <scope>IDENTIFICATION BY MASS SPECTROMETRY [LARGE SCALE ANALYSIS]</scope>
    <source>
        <strain>ATCC 25618 / H37Rv</strain>
    </source>
</reference>
<reference key="6">
    <citation type="journal article" date="2013" name="Nat. Chem. Biol.">
        <title>Antituberculosis thiophenes define a requirement for Pks13 in mycolic acid biosynthesis.</title>
        <authorList>
            <person name="Wilson R."/>
            <person name="Kumar P."/>
            <person name="Parashar V."/>
            <person name="Vilcheze C."/>
            <person name="Veyron-Churlet R."/>
            <person name="Freundlich J.S."/>
            <person name="Barnes S.W."/>
            <person name="Walker J.R."/>
            <person name="Szymonifka M.J."/>
            <person name="Marchiano E."/>
            <person name="Shenai S."/>
            <person name="Colangeli R."/>
            <person name="Jacobs W.R. Jr."/>
            <person name="Neiditch M.B."/>
            <person name="Kremer L."/>
            <person name="Alland D."/>
        </authorList>
    </citation>
    <scope>FUNCTION</scope>
    <scope>PATHWAY</scope>
    <scope>IDENTIFICATION AS A DRUG TARGET</scope>
    <scope>MUTAGENESIS OF PHE-79</scope>
</reference>
<reference key="7">
    <citation type="journal article" date="2014" name="Chem. Biol.">
        <title>The polyketide synthase Pks13 catalyzes a novel mechanism of lipid transfer in mycobacteria.</title>
        <authorList>
            <person name="Gavalda S."/>
            <person name="Bardou F."/>
            <person name="Laval F."/>
            <person name="Bon C."/>
            <person name="Malaga W."/>
            <person name="Chalut C."/>
            <person name="Guilhot C."/>
            <person name="Mourey L."/>
            <person name="Daffe M."/>
            <person name="Quemard A."/>
        </authorList>
    </citation>
    <scope>FUNCTION</scope>
    <scope>REACTION MECHANISM</scope>
    <scope>PATHWAY</scope>
    <scope>ACTIVE SITE</scope>
    <scope>MUTAGENESIS OF SER-1533</scope>
</reference>
<reference key="8">
    <citation type="journal article" date="2018" name="J. Med. Chem.">
        <title>Identification of novel coumestan derivatives as polyketide synthase 13 inhibitors against Mycobacterium tuberculosis.</title>
        <authorList>
            <person name="Zhang W."/>
            <person name="Lun S."/>
            <person name="Wang S.H."/>
            <person name="Jiang X.W."/>
            <person name="Yang F."/>
            <person name="Tang J."/>
            <person name="Manson A.L."/>
            <person name="Earl A.M."/>
            <person name="Gunosewoyo H."/>
            <person name="Bishai W.R."/>
            <person name="Yu L.F."/>
        </authorList>
    </citation>
    <scope>IDENTIFICATION AS A DRUG TARGET</scope>
    <scope>VARIANTS LYS-1640; SER-1640; GLY-1644 AND VAL-1667</scope>
</reference>
<reference key="9">
    <citation type="journal article" date="2019" name="J. Med. Chem.">
        <title>Identification of novel coumestan derivatives as polyketide synthase 13 inhibitors against Mycobacterium tuberculosis. Part II.</title>
        <authorList>
            <person name="Zhang W."/>
            <person name="Lun S."/>
            <person name="Liu L.L."/>
            <person name="Xiao S."/>
            <person name="Duan G."/>
            <person name="Gunosewoyo H."/>
            <person name="Yang F."/>
            <person name="Tang J."/>
            <person name="Bishai W.R."/>
            <person name="Yu L.F."/>
        </authorList>
    </citation>
    <scope>IDENTIFICATION AS A DRUG TARGET</scope>
</reference>
<reference evidence="18 19 20 21" key="10">
    <citation type="journal article" date="2012" name="J. Biol. Chem.">
        <title>Biochemical and structural study of the atypical acyltransferase domain from the mycobacterial polyketide synthase Pks13.</title>
        <authorList>
            <person name="Bergeret F."/>
            <person name="Gavalda S."/>
            <person name="Chalut C."/>
            <person name="Malaga W."/>
            <person name="Quemard A."/>
            <person name="Pedelacq J.D."/>
            <person name="Daffe M."/>
            <person name="Guilhot C."/>
            <person name="Mourey L."/>
            <person name="Bon C."/>
        </authorList>
    </citation>
    <scope>X-RAY CRYSTALLOGRAPHY (2.20 ANGSTROMS) OF 576-1062 OF APO FORM; PALMITOYLATED FORM AND CARBOXYPALMITOYLATED FORM</scope>
    <scope>DOMAIN</scope>
    <scope>ACTIVE SITE</scope>
    <source>
        <strain>H37Rv</strain>
    </source>
</reference>
<reference evidence="22 23 24 25 26 27 28" key="11">
    <citation type="journal article" date="2017" name="Cell">
        <title>Development of a novel lead that targets M.tuberculosis polyketide synthase 13.</title>
        <authorList>
            <person name="Aggarwal A."/>
            <person name="Parai M.K."/>
            <person name="Shetty N."/>
            <person name="Wallis D."/>
            <person name="Woolhiser L."/>
            <person name="Hastings C."/>
            <person name="Dutta N.K."/>
            <person name="Galaviz S."/>
            <person name="Dhakal R.C."/>
            <person name="Shrestha R."/>
            <person name="Wakabayashi S."/>
            <person name="Walpole C."/>
            <person name="Matthews D."/>
            <person name="Floyd D."/>
            <person name="Scullion P."/>
            <person name="Riley J."/>
            <person name="Epemolu O."/>
            <person name="Norval S."/>
            <person name="Snavely T."/>
            <person name="Robertson G.T."/>
            <person name="Rubin E.J."/>
            <person name="Ioerger T.R."/>
            <person name="Sirgel F.A."/>
            <person name="van der Merwe R."/>
            <person name="van Helden P.D."/>
            <person name="Keller P."/>
            <person name="Bottger E.C."/>
            <person name="Karakousis P.C."/>
            <person name="Lenaerts A.J."/>
            <person name="Sacchettini J.C."/>
        </authorList>
    </citation>
    <scope>X-RAY CRYSTALLOGRAPHY (1.72 ANGSTROMS) OF 1451-1733 OF APO FORM AND IN COMPLEXES WITH INHIBITORS AND OF MUTANT ASN-1607</scope>
    <scope>IDENTIFICATION AS A DRUG TARGET</scope>
</reference>
<reference evidence="29" key="12">
    <citation type="journal article" date="2018" name="PeerJ">
        <title>Crystallization and structure analysis of the core motif of the Pks13 acyltransferase domain from Mycobacterium tuberculosis.</title>
        <authorList>
            <person name="Yu M."/>
            <person name="Dou C."/>
            <person name="Gu Y."/>
            <person name="Cheng W."/>
        </authorList>
    </citation>
    <scope>X-RAY CRYSTALLOGRAPHY (2.59 ANGSTROMS) OF 717-827</scope>
</reference>
<reference evidence="30" key="13">
    <citation type="submission" date="2018-01" db="PDB data bank">
        <title>1.16 angstrom resolution crystal structure of acyl carrier protein domain (residues 1-100) of polyketide synthase Pks13 from Mycobacterium tuberculosis.</title>
        <authorList>
            <consortium name="Center for Structural Genomics of Infectious Diseases (CSGID)"/>
            <person name="Minasov G."/>
            <person name="Shuvalova L."/>
            <person name="Dubrovska I."/>
            <person name="Kiryukhina O."/>
            <person name="Grimshaw S."/>
            <person name="Kwon K."/>
            <person name="Anderson W.F."/>
            <person name="Satchell K.J.F."/>
            <person name="Joachimiak A."/>
        </authorList>
    </citation>
    <scope>X-RAY CRYSTALLOGRAPHY (1.16 ANGSTROMS) OF 1-100</scope>
</reference>
<reference evidence="31" key="14">
    <citation type="submission" date="2018-01" db="PDB data bank">
        <title>1.9 angstrom resolution crystal structure of acyl carrier protein domain (residues 1350-1461) of polyketide synthase Pks13 from Mycobacterium tuberculosis.</title>
        <authorList>
            <consortium name="Center for Structural Genomics of Infectious Diseases (CSGID)"/>
            <person name="Minasov G."/>
            <person name="Brunzelle J.S."/>
            <person name="Shuvalova L."/>
            <person name="Dubrovska I."/>
            <person name="Kiryukhina O."/>
            <person name="Grimshaw S."/>
            <person name="Kwon K."/>
            <person name="Anderson W.F."/>
            <person name="Satchell K.J.F."/>
            <person name="Joachimiak A."/>
        </authorList>
    </citation>
    <scope>X-RAY CRYSTALLOGRAPHY (1.90 ANGSTROMS) OF 1349-1461</scope>
</reference>
<reference evidence="32 33" key="15">
    <citation type="submission" date="2018-04" db="PDB data bank">
        <title>Mycobacterium tuberculosis polyketide synthase 13 N-terminal acyl carrier protein domain.</title>
        <authorList>
            <person name="Tang S."/>
            <person name="Sacchettini J."/>
        </authorList>
    </citation>
    <scope>X-RAY CRYSTALLOGRAPHY (1.63 ANGSTROMS) OF 10-93</scope>
</reference>
<sequence>MADVAESQENAPAERAELTVPEMRQWLRNWVGKAVGKAPDSIDESVPMVELGLSSRDAVAMAADIEDLTGVTLSVAVAFAHPTIESLATRIIEGEPETDLAGDDAEDWSRTGPAERVDIAIVGLSTRFPGEMNTPEQTWQALLEGRDGITDLPDGRWSEFLEEPRLAARVAGARTRGGYLKDIKGFDSEFFAVAKTEADNIDPQQRMALELTWEALEHARIPASSLRGQAVGVYIGSSTNDYSFLAVSDPTVAHPYAITGTSSSIIANRVSYFYDFHGPSVTIDTACSSSLVAIHQGVQALRNGEADVVVAGGVNALITPMVTLGFDEIGAVLAPDGRIKSFSADADGYTRSEGGGMLVLKRVDDARRDGDAILAVIAGSAVNHDGRSNGLIAPNQDAQADVLRRAYKDAGIDPRTVDYIEAHGTGTILGDPIEAEALGRVVGRGRPADRPALLGAVKTNVGHLESAAGAASMAKVVLALQHDKLPPSINFAGPSPYIDFDAMRLKMITTPTDWPRYGGYALAGVSSFGFGGANAHVVVREVLPRDVVEKEPEPEPEPKAAAEPAEAPTLAGHALRFDEFGNIITDSAVAEEPEPELPGVTEEALRLKEAALEELAAQEVTAPLVPLAVSAFLTSRKKAAAAELADWMQSPEGQASSLESIGRSLSRRNHGRSRAVVLAHDHDEAIKGLRAVAAGKQAPNVFSVDGPVTTGPVWVLAGFGAQHRKMGKSLYLRNEVFAAWIEKVDALVQDELGYSVLELILDDAQDYGIETTQVTIFAIQIALGELLRHHGAKPAAVIGQSLGEAASAYFAGGLSLRDATRAICSRSHLMGEGEAMLFGEYIRLMALVEYSADEIREVFSDFPDLEVCVYAAPTQTVIGGPPEQVDAILARAEAEGKFARKFATKGASHTSQMDPLLGELTAELQGIKPTSPTCGIFSTVHEGRYIKPGGEPIHDVEYWKKGLRHSVYFTHGIRNAVDSGHTTFLELAPNPVALMQVALTTADAGLHDAQLIPTLARKQDEVSSMVSTMAQLYVYGHDLDIRTLFSRASGPQDYANIPPTRFKRKEHWLPAHFSGDGSTYMPGTHVALPDGRHVWEYAPRDGNVDLAALVRAAAAHVLPDAQLTAAEQRAVPGDGARLVTTMTRHPGGASVQVHARIDESFTLVYDALVSRAGSESVLPTAVGAATAIAVADGAPVAPETPAEDADAETLSDSLTTRYMPSGMTRWSPDSGETIAERLGLIVGSAMGYEPEDLPWEVPLIELGLDSLMAVRIKNRVEYDFDLPPIQLTAVRDANLYNVEKLIEYAVEHRDEVQQLHEHQKTQTAEEIARAQAELLHGKVGKTEPVDSEAGVALPSPQNGEQPNPTGPALNVDVPPRDAAERVTFATWAIVTGKSPGGIFNELPRLDDEAAAKIAQRLSERAEGPITAEDVLTSSNIEALADKVRTYLEAGQIDGFVRTLRARPEAGGKVPVFVFHPAGGSTVVYEPLLGRLPADTPMYGFERVEGSIEERAQQYVPKLIEMQGDGPYVLVGWSLGGVLAYACAIGLRRLGKDVRFVGLIDAVRAGEEIPQTKEEIRKRWDRYAAFAEKTFNVTIPAIPYEQLEELDDEGQVRFVLDAVSQSGVQIPAGIIEHQRTSYLDNRAIDTAQIQPYDGHVTLYMADRYHDDAIMFEPRYAVRQPDGGWGEYVSDLEVVPIGGEHIQAIDEPIIAKVGEHMSRALGQIEADRTSEVGKQ</sequence>
<keyword id="KW-0002">3D-structure</keyword>
<keyword id="KW-0012">Acyltransferase</keyword>
<keyword id="KW-0276">Fatty acid metabolism</keyword>
<keyword id="KW-0443">Lipid metabolism</keyword>
<keyword id="KW-0511">Multifunctional enzyme</keyword>
<keyword id="KW-0596">Phosphopantetheine</keyword>
<keyword id="KW-0597">Phosphoprotein</keyword>
<keyword id="KW-1185">Reference proteome</keyword>
<keyword id="KW-0677">Repeat</keyword>
<keyword id="KW-0808">Transferase</keyword>
<organism>
    <name type="scientific">Mycobacterium tuberculosis (strain ATCC 25618 / H37Rv)</name>
    <dbReference type="NCBI Taxonomy" id="83332"/>
    <lineage>
        <taxon>Bacteria</taxon>
        <taxon>Bacillati</taxon>
        <taxon>Actinomycetota</taxon>
        <taxon>Actinomycetes</taxon>
        <taxon>Mycobacteriales</taxon>
        <taxon>Mycobacteriaceae</taxon>
        <taxon>Mycobacterium</taxon>
        <taxon>Mycobacterium tuberculosis complex</taxon>
    </lineage>
</organism>
<name>PKS13_MYCTU</name>
<comment type="function">
    <text evidence="5 6 8 9">Involved in the biosynthesis of mycolic acids (PubMed:19436070, PubMed:23770708, PubMed:25467124). Forms, with FadD32, the initiation module of the mycolic condensation system (PubMed:19436070, PubMed:19477415, PubMed:25467124). Synthesizes, in coupled reaction with FadD32, the biosynthetic precursors of mycolic acids, alpha-alkyl beta-ketoacids, via the condensation of two long chain fatty acid derivatives, a very long meromycoloyl-AMP and a shorter 2-carboxyacyl-CoA (PubMed:19436070, PubMed:25467124). The acyl chain of the acyl-AMP produced by FadD32 is specifically transferred onto the N-terminal ACP domain of Pks13, and then transferred onto the KS domain. The extender unit carboxyacyl-CoA is specifically loaded onto the AT domain, which catalyzes the covalent attachment of the carboxyacyl chain to its active site, and its subsequent transfer onto the P-pant arm of the C-terminal ACP domain. The KS domain catalyzes the condensation between the two loaded fatty acyl chains to produce an alpha-alkyl beta-ketothioester linked to the C-ACP domain (PubMed:19436070). Then, the thioesterase-like domain acts as a transacylase and is responsible for both the release and the transfer of the alpha-alkyl beta-ketoacyl chain onto a polyol acceptor molecule, particularly trehalose, leading to the formation of the trehalose monomycolate precursor (PubMed:25467124).</text>
</comment>
<comment type="activity regulation">
    <text evidence="5">The presence of FadD32 is necessary for the transfer of the acyl chain from the AMP carrier onto Pks13.</text>
</comment>
<comment type="pathway">
    <text evidence="5 8 9">Lipid metabolism; mycolic acid biosynthesis.</text>
</comment>
<comment type="domain">
    <text evidence="7 14">Made of a minimal module holding ketosynthase (KS), acyltransferase (AT), and C-terminal acyl carrier protein (C-ACP) domains, and additional N-terminal ACP (N-ACP) and C-terminal thioesterase-like domains.</text>
</comment>
<comment type="PTM">
    <text evidence="4 5">4'-phosphopantetheine is transferred from CoA to specific serines of apo-Pks13 by PptT.</text>
</comment>
<comment type="miscellaneous">
    <text evidence="8 10 11 12">Identified as a drug target (PubMed:23770708, PubMed:28669536, PubMed:29328655, PubMed:30875203). Fatty acyl-AMP loading is inhibited by thiophene (TP) compounds, which kill Mycobacterium tuberculosis. Overexpression of wild-type Pks13 results in TP resistance, and overexpression of the F79S mutant confers high resistance (PubMed:23770708). Structure-guided methods identified a highly potent and very safe lead compound, TAM16, a benzofuran class inhibitor that targets the thioesterase activity (PubMed:28669536). The thioesterase-like domain is inhibited by coumestan derivatives that possess excellent anti-tuberculosis activity against both the drug-susceptible and drug-resistant Mtb strains (PubMed:29328655, PubMed:30875203).</text>
</comment>
<feature type="chain" id="PRO_0000451588" description="Polyketide synthase Pks13">
    <location>
        <begin position="1"/>
        <end position="1733"/>
    </location>
</feature>
<feature type="domain" description="Carrier 1" evidence="1">
    <location>
        <begin position="17"/>
        <end position="95"/>
    </location>
</feature>
<feature type="domain" description="Ketosynthase family 3 (KS3)" evidence="2">
    <location>
        <begin position="116"/>
        <end position="541"/>
    </location>
</feature>
<feature type="domain" description="Carrier 2" evidence="1">
    <location>
        <begin position="1232"/>
        <end position="1309"/>
    </location>
</feature>
<feature type="region of interest" description="Disordered" evidence="3">
    <location>
        <begin position="548"/>
        <end position="567"/>
    </location>
</feature>
<feature type="region of interest" description="Acyltransferase" evidence="13">
    <location>
        <begin position="713"/>
        <end position="1034"/>
    </location>
</feature>
<feature type="region of interest" description="Disordered" evidence="3">
    <location>
        <begin position="1344"/>
        <end position="1368"/>
    </location>
</feature>
<feature type="region of interest" description="Thioesterase-like" evidence="13">
    <location>
        <begin position="1470"/>
        <end position="1563"/>
    </location>
</feature>
<feature type="compositionally biased region" description="Basic and acidic residues" evidence="3">
    <location>
        <begin position="548"/>
        <end position="560"/>
    </location>
</feature>
<feature type="active site" description="Acyl-thioester intermediate; for beta-ketoacyl synthase activity" evidence="2">
    <location>
        <position position="287"/>
    </location>
</feature>
<feature type="active site" description="For beta-ketoacyl synthase activity" evidence="2">
    <location>
        <position position="423"/>
    </location>
</feature>
<feature type="active site" description="For beta-ketoacyl synthase activity" evidence="2">
    <location>
        <position position="463"/>
    </location>
</feature>
<feature type="active site" description="Acyl-ester intermediate; for acyltransferase activity" evidence="15">
    <location>
        <position position="801"/>
    </location>
</feature>
<feature type="active site" description="For thioesterase-like activity" evidence="16">
    <location>
        <position position="1533"/>
    </location>
</feature>
<feature type="modified residue" description="O-(pantetheine 4'-phosphoryl)serine" evidence="1 5">
    <location>
        <position position="55"/>
    </location>
</feature>
<feature type="modified residue" description="O-(pantetheine 4'-phosphoryl)serine" evidence="1 5">
    <location>
        <position position="1266"/>
    </location>
</feature>
<feature type="sequence variant" description="Coumestan resistant." evidence="11">
    <original>N</original>
    <variation>K</variation>
    <location>
        <position position="1640"/>
    </location>
</feature>
<feature type="sequence variant" description="Coumestan resistant." evidence="11">
    <original>N</original>
    <variation>S</variation>
    <location>
        <position position="1640"/>
    </location>
</feature>
<feature type="sequence variant" description="Coumestan resistant." evidence="11">
    <original>D</original>
    <variation>G</variation>
    <location>
        <position position="1644"/>
    </location>
</feature>
<feature type="sequence variant" description="Coumestan resistant." evidence="11">
    <original>A</original>
    <variation>V</variation>
    <location>
        <position position="1667"/>
    </location>
</feature>
<feature type="mutagenesis site" description="Confers thiophene resistance." evidence="8">
    <original>F</original>
    <variation>S</variation>
    <location>
        <position position="79"/>
    </location>
</feature>
<feature type="mutagenesis site" description="Cannot form alpha-alkyl beta-ketoacids derivatives." evidence="9">
    <original>S</original>
    <variation>A</variation>
    <location>
        <position position="1533"/>
    </location>
</feature>
<feature type="helix" evidence="36">
    <location>
        <begin position="12"/>
        <end position="15"/>
    </location>
</feature>
<feature type="helix" evidence="36">
    <location>
        <begin position="20"/>
        <end position="35"/>
    </location>
</feature>
<feature type="helix" evidence="36">
    <location>
        <begin position="39"/>
        <end position="41"/>
    </location>
</feature>
<feature type="helix" evidence="36">
    <location>
        <begin position="48"/>
        <end position="50"/>
    </location>
</feature>
<feature type="helix" evidence="36">
    <location>
        <begin position="55"/>
        <end position="69"/>
    </location>
</feature>
<feature type="helix" evidence="36">
    <location>
        <begin position="75"/>
        <end position="80"/>
    </location>
</feature>
<feature type="helix" evidence="36">
    <location>
        <begin position="84"/>
        <end position="93"/>
    </location>
</feature>
<feature type="strand" evidence="40">
    <location>
        <begin position="119"/>
        <end position="124"/>
    </location>
</feature>
<feature type="helix" evidence="40">
    <location>
        <begin position="135"/>
        <end position="144"/>
    </location>
</feature>
<feature type="strand" evidence="40">
    <location>
        <begin position="159"/>
        <end position="163"/>
    </location>
</feature>
<feature type="helix" evidence="40">
    <location>
        <begin position="166"/>
        <end position="171"/>
    </location>
</feature>
<feature type="strand" evidence="40">
    <location>
        <begin position="183"/>
        <end position="186"/>
    </location>
</feature>
<feature type="turn" evidence="40">
    <location>
        <begin position="188"/>
        <end position="192"/>
    </location>
</feature>
<feature type="helix" evidence="40">
    <location>
        <begin position="195"/>
        <end position="198"/>
    </location>
</feature>
<feature type="helix" evidence="40">
    <location>
        <begin position="203"/>
        <end position="218"/>
    </location>
</feature>
<feature type="helix" evidence="40">
    <location>
        <begin position="223"/>
        <end position="226"/>
    </location>
</feature>
<feature type="strand" evidence="40">
    <location>
        <begin position="231"/>
        <end position="236"/>
    </location>
</feature>
<feature type="helix" evidence="40">
    <location>
        <begin position="242"/>
        <end position="246"/>
    </location>
</feature>
<feature type="turn" evidence="40">
    <location>
        <begin position="256"/>
        <end position="260"/>
    </location>
</feature>
<feature type="helix" evidence="40">
    <location>
        <begin position="265"/>
        <end position="273"/>
    </location>
</feature>
<feature type="strand" evidence="40">
    <location>
        <begin position="280"/>
        <end position="284"/>
    </location>
</feature>
<feature type="helix" evidence="40">
    <location>
        <begin position="286"/>
        <end position="288"/>
    </location>
</feature>
<feature type="helix" evidence="40">
    <location>
        <begin position="289"/>
        <end position="303"/>
    </location>
</feature>
<feature type="strand" evidence="40">
    <location>
        <begin position="307"/>
        <end position="313"/>
    </location>
</feature>
<feature type="helix" evidence="40">
    <location>
        <begin position="320"/>
        <end position="327"/>
    </location>
</feature>
<feature type="strand" evidence="40">
    <location>
        <begin position="329"/>
        <end position="333"/>
    </location>
</feature>
<feature type="strand" evidence="40">
    <location>
        <begin position="342"/>
        <end position="344"/>
    </location>
</feature>
<feature type="strand" evidence="40">
    <location>
        <begin position="356"/>
        <end position="362"/>
    </location>
</feature>
<feature type="helix" evidence="40">
    <location>
        <begin position="363"/>
        <end position="369"/>
    </location>
</feature>
<feature type="strand" evidence="40">
    <location>
        <begin position="375"/>
        <end position="384"/>
    </location>
</feature>
<feature type="strand" evidence="40">
    <location>
        <begin position="387"/>
        <end position="390"/>
    </location>
</feature>
<feature type="helix" evidence="40">
    <location>
        <begin position="396"/>
        <end position="409"/>
    </location>
</feature>
<feature type="helix" evidence="40">
    <location>
        <begin position="414"/>
        <end position="416"/>
    </location>
</feature>
<feature type="helix" evidence="40">
    <location>
        <begin position="430"/>
        <end position="441"/>
    </location>
</feature>
<feature type="helix" evidence="40">
    <location>
        <begin position="458"/>
        <end position="461"/>
    </location>
</feature>
<feature type="helix" evidence="40">
    <location>
        <begin position="465"/>
        <end position="467"/>
    </location>
</feature>
<feature type="helix" evidence="40">
    <location>
        <begin position="468"/>
        <end position="482"/>
    </location>
</feature>
<feature type="strand" evidence="40">
    <location>
        <begin position="496"/>
        <end position="498"/>
    </location>
</feature>
<feature type="turn" evidence="40">
    <location>
        <begin position="500"/>
        <end position="504"/>
    </location>
</feature>
<feature type="strand" evidence="40">
    <location>
        <begin position="525"/>
        <end position="528"/>
    </location>
</feature>
<feature type="strand" evidence="40">
    <location>
        <begin position="532"/>
        <end position="540"/>
    </location>
</feature>
<feature type="turn" evidence="40">
    <location>
        <begin position="545"/>
        <end position="547"/>
    </location>
</feature>
<feature type="helix" evidence="40">
    <location>
        <begin position="602"/>
        <end position="617"/>
    </location>
</feature>
<feature type="strand" evidence="40">
    <location>
        <begin position="625"/>
        <end position="633"/>
    </location>
</feature>
<feature type="helix" evidence="40">
    <location>
        <begin position="634"/>
        <end position="648"/>
    </location>
</feature>
<feature type="turn" evidence="40">
    <location>
        <begin position="652"/>
        <end position="654"/>
    </location>
</feature>
<feature type="helix" evidence="40">
    <location>
        <begin position="658"/>
        <end position="666"/>
    </location>
</feature>
<feature type="strand" evidence="40">
    <location>
        <begin position="672"/>
        <end position="681"/>
    </location>
</feature>
<feature type="helix" evidence="40">
    <location>
        <begin position="682"/>
        <end position="694"/>
    </location>
</feature>
<feature type="strand" evidence="40">
    <location>
        <begin position="699"/>
        <end position="706"/>
    </location>
</feature>
<feature type="strand" evidence="40">
    <location>
        <begin position="713"/>
        <end position="715"/>
    </location>
</feature>
<feature type="helix" evidence="35">
    <location>
        <begin position="721"/>
        <end position="732"/>
    </location>
</feature>
<feature type="helix" evidence="35">
    <location>
        <begin position="735"/>
        <end position="751"/>
    </location>
</feature>
<feature type="strand" evidence="35">
    <location>
        <begin position="752"/>
        <end position="754"/>
    </location>
</feature>
<feature type="helix" evidence="35">
    <location>
        <begin position="756"/>
        <end position="761"/>
    </location>
</feature>
<feature type="helix" evidence="35">
    <location>
        <begin position="769"/>
        <end position="789"/>
    </location>
</feature>
<feature type="helix" evidence="35">
    <location>
        <begin position="794"/>
        <end position="796"/>
    </location>
</feature>
<feature type="helix" evidence="35">
    <location>
        <begin position="799"/>
        <end position="801"/>
    </location>
</feature>
<feature type="helix" evidence="35">
    <location>
        <begin position="804"/>
        <end position="810"/>
    </location>
</feature>
<feature type="helix" evidence="35">
    <location>
        <begin position="816"/>
        <end position="823"/>
    </location>
</feature>
<feature type="turn" evidence="40">
    <location>
        <begin position="839"/>
        <end position="841"/>
    </location>
</feature>
<feature type="strand" evidence="40">
    <location>
        <begin position="844"/>
        <end position="848"/>
    </location>
</feature>
<feature type="helix" evidence="40">
    <location>
        <begin position="852"/>
        <end position="857"/>
    </location>
</feature>
<feature type="strand" evidence="40">
    <location>
        <begin position="866"/>
        <end position="869"/>
    </location>
</feature>
<feature type="strand" evidence="40">
    <location>
        <begin position="872"/>
        <end position="874"/>
    </location>
</feature>
<feature type="strand" evidence="40">
    <location>
        <begin position="876"/>
        <end position="880"/>
    </location>
</feature>
<feature type="helix" evidence="40">
    <location>
        <begin position="882"/>
        <end position="895"/>
    </location>
</feature>
<feature type="helix" evidence="40">
    <location>
        <begin position="911"/>
        <end position="913"/>
    </location>
</feature>
<feature type="turn" evidence="40">
    <location>
        <begin position="914"/>
        <end position="916"/>
    </location>
</feature>
<feature type="helix" evidence="40">
    <location>
        <begin position="917"/>
        <end position="922"/>
    </location>
</feature>
<feature type="strand" evidence="40">
    <location>
        <begin position="933"/>
        <end position="936"/>
    </location>
</feature>
<feature type="turn" evidence="40">
    <location>
        <begin position="939"/>
        <end position="943"/>
    </location>
</feature>
<feature type="helix" evidence="40">
    <location>
        <begin position="956"/>
        <end position="964"/>
    </location>
</feature>
<feature type="helix" evidence="40">
    <location>
        <begin position="969"/>
        <end position="978"/>
    </location>
</feature>
<feature type="strand" evidence="40">
    <location>
        <begin position="983"/>
        <end position="986"/>
    </location>
</feature>
<feature type="strand" evidence="40">
    <location>
        <begin position="988"/>
        <end position="990"/>
    </location>
</feature>
<feature type="helix" evidence="40">
    <location>
        <begin position="993"/>
        <end position="1004"/>
    </location>
</feature>
<feature type="strand" evidence="40">
    <location>
        <begin position="1010"/>
        <end position="1013"/>
    </location>
</feature>
<feature type="strand" evidence="40">
    <location>
        <begin position="1017"/>
        <end position="1019"/>
    </location>
</feature>
<feature type="helix" evidence="40">
    <location>
        <begin position="1021"/>
        <end position="1035"/>
    </location>
</feature>
<feature type="helix" evidence="40">
    <location>
        <begin position="1041"/>
        <end position="1044"/>
    </location>
</feature>
<feature type="helix" evidence="40">
    <location>
        <begin position="1051"/>
        <end position="1053"/>
    </location>
</feature>
<feature type="helix" evidence="37">
    <location>
        <begin position="1378"/>
        <end position="1391"/>
    </location>
</feature>
<feature type="strand" evidence="37">
    <location>
        <begin position="1397"/>
        <end position="1400"/>
    </location>
</feature>
<feature type="helix" evidence="37">
    <location>
        <begin position="1407"/>
        <end position="1421"/>
    </location>
</feature>
<feature type="helix" evidence="37">
    <location>
        <begin position="1427"/>
        <end position="1431"/>
    </location>
</feature>
<feature type="helix" evidence="37">
    <location>
        <begin position="1436"/>
        <end position="1449"/>
    </location>
</feature>
<feature type="strand" evidence="38">
    <location>
        <begin position="1451"/>
        <end position="1453"/>
    </location>
</feature>
<feature type="strand" evidence="39">
    <location>
        <begin position="1456"/>
        <end position="1460"/>
    </location>
</feature>
<feature type="strand" evidence="39">
    <location>
        <begin position="1464"/>
        <end position="1466"/>
    </location>
</feature>
<feature type="strand" evidence="39">
    <location>
        <begin position="1471"/>
        <end position="1474"/>
    </location>
</feature>
<feature type="helix" evidence="39">
    <location>
        <begin position="1481"/>
        <end position="1484"/>
    </location>
</feature>
<feature type="helix" evidence="39">
    <location>
        <begin position="1485"/>
        <end position="1489"/>
    </location>
</feature>
<feature type="strand" evidence="39">
    <location>
        <begin position="1497"/>
        <end position="1500"/>
    </location>
</feature>
<feature type="helix" evidence="39">
    <location>
        <begin position="1507"/>
        <end position="1522"/>
    </location>
</feature>
<feature type="strand" evidence="39">
    <location>
        <begin position="1527"/>
        <end position="1532"/>
    </location>
</feature>
<feature type="helix" evidence="39">
    <location>
        <begin position="1534"/>
        <end position="1548"/>
    </location>
</feature>
<feature type="strand" evidence="39">
    <location>
        <begin position="1553"/>
        <end position="1560"/>
    </location>
</feature>
<feature type="helix" evidence="39">
    <location>
        <begin position="1572"/>
        <end position="1589"/>
    </location>
</feature>
<feature type="helix" evidence="39">
    <location>
        <begin position="1599"/>
        <end position="1602"/>
    </location>
</feature>
<feature type="helix" evidence="39">
    <location>
        <begin position="1607"/>
        <end position="1620"/>
    </location>
</feature>
<feature type="strand" evidence="34">
    <location>
        <begin position="1621"/>
        <end position="1623"/>
    </location>
</feature>
<feature type="helix" evidence="39">
    <location>
        <begin position="1627"/>
        <end position="1643"/>
    </location>
</feature>
<feature type="strand" evidence="39">
    <location>
        <begin position="1655"/>
        <end position="1659"/>
    </location>
</feature>
<feature type="helix" evidence="39">
    <location>
        <begin position="1665"/>
        <end position="1670"/>
    </location>
</feature>
<feature type="helix" evidence="39">
    <location>
        <begin position="1672"/>
        <end position="1675"/>
    </location>
</feature>
<feature type="turn" evidence="39">
    <location>
        <begin position="1679"/>
        <end position="1682"/>
    </location>
</feature>
<feature type="turn" evidence="39">
    <location>
        <begin position="1684"/>
        <end position="1686"/>
    </location>
</feature>
<feature type="strand" evidence="39">
    <location>
        <begin position="1687"/>
        <end position="1694"/>
    </location>
</feature>
<feature type="helix" evidence="39">
    <location>
        <begin position="1699"/>
        <end position="1701"/>
    </location>
</feature>
<feature type="helix" evidence="39">
    <location>
        <begin position="1707"/>
        <end position="1726"/>
    </location>
</feature>
<gene>
    <name evidence="17" type="primary">pks13</name>
    <name evidence="17" type="ordered locus">Rv3800c</name>
</gene>
<dbReference type="EC" id="2.3.1.-" evidence="5 9"/>
<dbReference type="EMBL" id="AL123456">
    <property type="protein sequence ID" value="CCP46629.1"/>
    <property type="molecule type" value="Genomic_DNA"/>
</dbReference>
<dbReference type="RefSeq" id="NP_218317.1">
    <property type="nucleotide sequence ID" value="NC_000962.3"/>
</dbReference>
<dbReference type="RefSeq" id="WP_003902557.1">
    <property type="nucleotide sequence ID" value="NZ_NVQJ01000022.1"/>
</dbReference>
<dbReference type="PDB" id="3TZW">
    <property type="method" value="X-ray"/>
    <property type="resolution" value="2.60 A"/>
    <property type="chains" value="A=576-1062"/>
</dbReference>
<dbReference type="PDB" id="3TZX">
    <property type="method" value="X-ray"/>
    <property type="resolution" value="2.30 A"/>
    <property type="chains" value="A/B=576-1062"/>
</dbReference>
<dbReference type="PDB" id="3TZY">
    <property type="method" value="X-ray"/>
    <property type="resolution" value="2.20 A"/>
    <property type="chains" value="A/B=576-1062"/>
</dbReference>
<dbReference type="PDB" id="3TZZ">
    <property type="method" value="X-ray"/>
    <property type="resolution" value="2.49 A"/>
    <property type="chains" value="A/B=576-1062"/>
</dbReference>
<dbReference type="PDB" id="5V3W">
    <property type="method" value="X-ray"/>
    <property type="resolution" value="1.72 A"/>
    <property type="chains" value="A/B=1451-1733"/>
</dbReference>
<dbReference type="PDB" id="5V3X">
    <property type="method" value="X-ray"/>
    <property type="resolution" value="1.94 A"/>
    <property type="chains" value="A/B=1451-1733"/>
</dbReference>
<dbReference type="PDB" id="5V3Y">
    <property type="method" value="X-ray"/>
    <property type="resolution" value="1.98 A"/>
    <property type="chains" value="A/B=1451-1733"/>
</dbReference>
<dbReference type="PDB" id="5V3Z">
    <property type="method" value="X-ray"/>
    <property type="resolution" value="1.88 A"/>
    <property type="chains" value="A/B=1451-1733"/>
</dbReference>
<dbReference type="PDB" id="5V40">
    <property type="method" value="X-ray"/>
    <property type="resolution" value="1.99 A"/>
    <property type="chains" value="A/B=1451-1733"/>
</dbReference>
<dbReference type="PDB" id="5V41">
    <property type="method" value="X-ray"/>
    <property type="resolution" value="2.05 A"/>
    <property type="chains" value="A/B=1451-1733"/>
</dbReference>
<dbReference type="PDB" id="5V42">
    <property type="method" value="X-ray"/>
    <property type="resolution" value="1.99 A"/>
    <property type="chains" value="A/B=1451-1733"/>
</dbReference>
<dbReference type="PDB" id="5XUO">
    <property type="method" value="X-ray"/>
    <property type="resolution" value="2.59 A"/>
    <property type="chains" value="A=717-827"/>
</dbReference>
<dbReference type="PDB" id="6C4Q">
    <property type="method" value="X-ray"/>
    <property type="resolution" value="1.16 A"/>
    <property type="chains" value="A=1-100"/>
</dbReference>
<dbReference type="PDB" id="6C4V">
    <property type="method" value="X-ray"/>
    <property type="resolution" value="1.90 A"/>
    <property type="chains" value="A=1349-1461"/>
</dbReference>
<dbReference type="PDB" id="6D8I">
    <property type="method" value="X-ray"/>
    <property type="resolution" value="1.65 A"/>
    <property type="chains" value="A=10-93"/>
</dbReference>
<dbReference type="PDB" id="6D8J">
    <property type="method" value="X-ray"/>
    <property type="resolution" value="1.63 A"/>
    <property type="chains" value="A=10-93"/>
</dbReference>
<dbReference type="PDB" id="7M7V">
    <property type="method" value="X-ray"/>
    <property type="resolution" value="2.29 A"/>
    <property type="chains" value="A/B=1451-1733"/>
</dbReference>
<dbReference type="PDB" id="7VJT">
    <property type="method" value="X-ray"/>
    <property type="resolution" value="1.94 A"/>
    <property type="chains" value="A/B=1451-1733"/>
</dbReference>
<dbReference type="PDB" id="8Q0T">
    <property type="method" value="X-ray"/>
    <property type="resolution" value="1.80 A"/>
    <property type="chains" value="A/B=1451-1733"/>
</dbReference>
<dbReference type="PDB" id="8Q0U">
    <property type="method" value="X-ray"/>
    <property type="resolution" value="1.80 A"/>
    <property type="chains" value="A/B=1451-1733"/>
</dbReference>
<dbReference type="PDB" id="8Q17">
    <property type="method" value="X-ray"/>
    <property type="resolution" value="1.71 A"/>
    <property type="chains" value="A/B=1451-1733"/>
</dbReference>
<dbReference type="PDB" id="8TQG">
    <property type="method" value="X-ray"/>
    <property type="resolution" value="2.20 A"/>
    <property type="chains" value="A=1451-1733"/>
</dbReference>
<dbReference type="PDB" id="8TQV">
    <property type="method" value="X-ray"/>
    <property type="resolution" value="2.00 A"/>
    <property type="chains" value="A/B=1452-1726"/>
</dbReference>
<dbReference type="PDB" id="8TR4">
    <property type="method" value="X-ray"/>
    <property type="resolution" value="2.10 A"/>
    <property type="chains" value="A/B=1451-1733"/>
</dbReference>
<dbReference type="PDB" id="8TRY">
    <property type="method" value="X-ray"/>
    <property type="resolution" value="2.35 A"/>
    <property type="chains" value="A/B=1451-1733"/>
</dbReference>
<dbReference type="PDB" id="9F48">
    <property type="method" value="EM"/>
    <property type="resolution" value="3.40 A"/>
    <property type="chains" value="A/B=1-1733"/>
</dbReference>
<dbReference type="PDBsum" id="3TZW"/>
<dbReference type="PDBsum" id="3TZX"/>
<dbReference type="PDBsum" id="3TZY"/>
<dbReference type="PDBsum" id="3TZZ"/>
<dbReference type="PDBsum" id="5V3W"/>
<dbReference type="PDBsum" id="5V3X"/>
<dbReference type="PDBsum" id="5V3Y"/>
<dbReference type="PDBsum" id="5V3Z"/>
<dbReference type="PDBsum" id="5V40"/>
<dbReference type="PDBsum" id="5V41"/>
<dbReference type="PDBsum" id="5V42"/>
<dbReference type="PDBsum" id="5XUO"/>
<dbReference type="PDBsum" id="6C4Q"/>
<dbReference type="PDBsum" id="6C4V"/>
<dbReference type="PDBsum" id="6D8I"/>
<dbReference type="PDBsum" id="6D8J"/>
<dbReference type="PDBsum" id="7M7V"/>
<dbReference type="PDBsum" id="7VJT"/>
<dbReference type="PDBsum" id="8Q0T"/>
<dbReference type="PDBsum" id="8Q0U"/>
<dbReference type="PDBsum" id="8Q17"/>
<dbReference type="PDBsum" id="8TQG"/>
<dbReference type="PDBsum" id="8TQV"/>
<dbReference type="PDBsum" id="8TR4"/>
<dbReference type="PDBsum" id="8TRY"/>
<dbReference type="PDBsum" id="9F48"/>
<dbReference type="EMDB" id="EMD-50185"/>
<dbReference type="SASBDB" id="I6X8D2"/>
<dbReference type="SMR" id="I6X8D2"/>
<dbReference type="IntAct" id="I6X8D2">
    <property type="interactions" value="1"/>
</dbReference>
<dbReference type="STRING" id="83332.Rv3800c"/>
<dbReference type="BindingDB" id="I6X8D2"/>
<dbReference type="ChEMBL" id="CHEMBL4105939"/>
<dbReference type="ESTHER" id="myctu-PKS13">
    <property type="family name" value="Thioesterase"/>
</dbReference>
<dbReference type="PaxDb" id="83332-Rv3800c"/>
<dbReference type="DNASU" id="886133"/>
<dbReference type="GeneID" id="886133"/>
<dbReference type="KEGG" id="mtu:Rv3800c"/>
<dbReference type="KEGG" id="mtv:RVBD_3800c"/>
<dbReference type="PATRIC" id="fig|83332.111.peg.4225"/>
<dbReference type="TubercuList" id="Rv3800c"/>
<dbReference type="eggNOG" id="COG0236">
    <property type="taxonomic scope" value="Bacteria"/>
</dbReference>
<dbReference type="eggNOG" id="COG3319">
    <property type="taxonomic scope" value="Bacteria"/>
</dbReference>
<dbReference type="eggNOG" id="COG3321">
    <property type="taxonomic scope" value="Bacteria"/>
</dbReference>
<dbReference type="InParanoid" id="I6X8D2"/>
<dbReference type="OrthoDB" id="9778690at2"/>
<dbReference type="PhylomeDB" id="I6X8D2"/>
<dbReference type="BioCyc" id="MetaCyc:G185E-8096-MONOMER"/>
<dbReference type="UniPathway" id="UPA00915"/>
<dbReference type="Proteomes" id="UP000001584">
    <property type="component" value="Chromosome"/>
</dbReference>
<dbReference type="GO" id="GO:0005737">
    <property type="term" value="C:cytoplasm"/>
    <property type="evidence" value="ECO:0000318"/>
    <property type="project" value="GO_Central"/>
</dbReference>
<dbReference type="GO" id="GO:0004315">
    <property type="term" value="F:3-oxoacyl-[acyl-carrier-protein] synthase activity"/>
    <property type="evidence" value="ECO:0007669"/>
    <property type="project" value="InterPro"/>
</dbReference>
<dbReference type="GO" id="GO:0004312">
    <property type="term" value="F:fatty acid synthase activity"/>
    <property type="evidence" value="ECO:0000318"/>
    <property type="project" value="GO_Central"/>
</dbReference>
<dbReference type="GO" id="GO:0031177">
    <property type="term" value="F:phosphopantetheine binding"/>
    <property type="evidence" value="ECO:0007669"/>
    <property type="project" value="InterPro"/>
</dbReference>
<dbReference type="GO" id="GO:0071770">
    <property type="term" value="P:DIM/DIP cell wall layer assembly"/>
    <property type="evidence" value="ECO:0000318"/>
    <property type="project" value="GO_Central"/>
</dbReference>
<dbReference type="GO" id="GO:0006633">
    <property type="term" value="P:fatty acid biosynthetic process"/>
    <property type="evidence" value="ECO:0000318"/>
    <property type="project" value="GO_Central"/>
</dbReference>
<dbReference type="CDD" id="cd00833">
    <property type="entry name" value="PKS"/>
    <property type="match status" value="1"/>
</dbReference>
<dbReference type="FunFam" id="3.30.70.250:FF:000003">
    <property type="entry name" value="Polyketide beta-ketoacyl synthase Pks3"/>
    <property type="match status" value="1"/>
</dbReference>
<dbReference type="FunFam" id="1.10.1200.10:FF:000022">
    <property type="entry name" value="Polyketide synthase Pks13"/>
    <property type="match status" value="1"/>
</dbReference>
<dbReference type="FunFam" id="1.10.1200.10:FF:000043">
    <property type="entry name" value="Polyketide synthase Pks13"/>
    <property type="match status" value="1"/>
</dbReference>
<dbReference type="FunFam" id="3.40.47.10:FF:000042">
    <property type="entry name" value="Polyketide synthase Pks13"/>
    <property type="match status" value="1"/>
</dbReference>
<dbReference type="FunFam" id="3.40.50.1820:FF:000249">
    <property type="entry name" value="Polyketide synthase Pks13"/>
    <property type="match status" value="1"/>
</dbReference>
<dbReference type="Gene3D" id="3.40.47.10">
    <property type="match status" value="1"/>
</dbReference>
<dbReference type="Gene3D" id="1.10.1200.10">
    <property type="entry name" value="ACP-like"/>
    <property type="match status" value="2"/>
</dbReference>
<dbReference type="Gene3D" id="3.40.50.1820">
    <property type="entry name" value="alpha/beta hydrolase"/>
    <property type="match status" value="1"/>
</dbReference>
<dbReference type="Gene3D" id="3.30.70.250">
    <property type="entry name" value="Malonyl-CoA ACP transacylase, ACP-binding"/>
    <property type="match status" value="1"/>
</dbReference>
<dbReference type="Gene3D" id="3.40.366.10">
    <property type="entry name" value="Malonyl-Coenzyme A Acyl Carrier Protein, domain 2"/>
    <property type="match status" value="1"/>
</dbReference>
<dbReference type="InterPro" id="IPR029058">
    <property type="entry name" value="AB_hydrolase_fold"/>
</dbReference>
<dbReference type="InterPro" id="IPR001227">
    <property type="entry name" value="Ac_transferase_dom_sf"/>
</dbReference>
<dbReference type="InterPro" id="IPR036736">
    <property type="entry name" value="ACP-like_sf"/>
</dbReference>
<dbReference type="InterPro" id="IPR014043">
    <property type="entry name" value="Acyl_transferase_dom"/>
</dbReference>
<dbReference type="InterPro" id="IPR016035">
    <property type="entry name" value="Acyl_Trfase/lysoPLipase"/>
</dbReference>
<dbReference type="InterPro" id="IPR018201">
    <property type="entry name" value="Ketoacyl_synth_AS"/>
</dbReference>
<dbReference type="InterPro" id="IPR014031">
    <property type="entry name" value="Ketoacyl_synth_C"/>
</dbReference>
<dbReference type="InterPro" id="IPR014030">
    <property type="entry name" value="Ketoacyl_synth_N"/>
</dbReference>
<dbReference type="InterPro" id="IPR016036">
    <property type="entry name" value="Malonyl_transacylase_ACP-bd"/>
</dbReference>
<dbReference type="InterPro" id="IPR053778">
    <property type="entry name" value="Pks13"/>
</dbReference>
<dbReference type="InterPro" id="IPR032821">
    <property type="entry name" value="PKS_assoc"/>
</dbReference>
<dbReference type="InterPro" id="IPR020841">
    <property type="entry name" value="PKS_Beta-ketoAc_synthase_dom"/>
</dbReference>
<dbReference type="InterPro" id="IPR050091">
    <property type="entry name" value="PKS_NRPS_Biosynth_Enz"/>
</dbReference>
<dbReference type="InterPro" id="IPR020806">
    <property type="entry name" value="PKS_PP-bd"/>
</dbReference>
<dbReference type="InterPro" id="IPR009081">
    <property type="entry name" value="PP-bd_ACP"/>
</dbReference>
<dbReference type="InterPro" id="IPR001031">
    <property type="entry name" value="Thioesterase"/>
</dbReference>
<dbReference type="InterPro" id="IPR016039">
    <property type="entry name" value="Thiolase-like"/>
</dbReference>
<dbReference type="NCBIfam" id="NF040607">
    <property type="entry name" value="mycolic_Pks13"/>
    <property type="match status" value="1"/>
</dbReference>
<dbReference type="PANTHER" id="PTHR43775">
    <property type="entry name" value="FATTY ACID SYNTHASE"/>
    <property type="match status" value="1"/>
</dbReference>
<dbReference type="PANTHER" id="PTHR43775:SF37">
    <property type="entry name" value="SI:DKEY-61P9.11"/>
    <property type="match status" value="1"/>
</dbReference>
<dbReference type="Pfam" id="PF00698">
    <property type="entry name" value="Acyl_transf_1"/>
    <property type="match status" value="1"/>
</dbReference>
<dbReference type="Pfam" id="PF16197">
    <property type="entry name" value="KAsynt_C_assoc"/>
    <property type="match status" value="1"/>
</dbReference>
<dbReference type="Pfam" id="PF00109">
    <property type="entry name" value="ketoacyl-synt"/>
    <property type="match status" value="1"/>
</dbReference>
<dbReference type="Pfam" id="PF02801">
    <property type="entry name" value="Ketoacyl-synt_C"/>
    <property type="match status" value="1"/>
</dbReference>
<dbReference type="Pfam" id="PF00550">
    <property type="entry name" value="PP-binding"/>
    <property type="match status" value="2"/>
</dbReference>
<dbReference type="Pfam" id="PF00975">
    <property type="entry name" value="Thioesterase"/>
    <property type="match status" value="1"/>
</dbReference>
<dbReference type="SMART" id="SM00827">
    <property type="entry name" value="PKS_AT"/>
    <property type="match status" value="1"/>
</dbReference>
<dbReference type="SMART" id="SM00825">
    <property type="entry name" value="PKS_KS"/>
    <property type="match status" value="1"/>
</dbReference>
<dbReference type="SMART" id="SM00823">
    <property type="entry name" value="PKS_PP"/>
    <property type="match status" value="2"/>
</dbReference>
<dbReference type="SUPFAM" id="SSF47336">
    <property type="entry name" value="ACP-like"/>
    <property type="match status" value="2"/>
</dbReference>
<dbReference type="SUPFAM" id="SSF53474">
    <property type="entry name" value="alpha/beta-Hydrolases"/>
    <property type="match status" value="1"/>
</dbReference>
<dbReference type="SUPFAM" id="SSF52151">
    <property type="entry name" value="FabD/lysophospholipase-like"/>
    <property type="match status" value="1"/>
</dbReference>
<dbReference type="SUPFAM" id="SSF55048">
    <property type="entry name" value="Probable ACP-binding domain of malonyl-CoA ACP transacylase"/>
    <property type="match status" value="1"/>
</dbReference>
<dbReference type="SUPFAM" id="SSF53901">
    <property type="entry name" value="Thiolase-like"/>
    <property type="match status" value="1"/>
</dbReference>
<dbReference type="PROSITE" id="PS50075">
    <property type="entry name" value="CARRIER"/>
    <property type="match status" value="2"/>
</dbReference>
<dbReference type="PROSITE" id="PS00606">
    <property type="entry name" value="KS3_1"/>
    <property type="match status" value="1"/>
</dbReference>
<dbReference type="PROSITE" id="PS52004">
    <property type="entry name" value="KS3_2"/>
    <property type="match status" value="1"/>
</dbReference>
<proteinExistence type="evidence at protein level"/>
<evidence type="ECO:0000255" key="1">
    <source>
        <dbReference type="PROSITE-ProRule" id="PRU00258"/>
    </source>
</evidence>
<evidence type="ECO:0000255" key="2">
    <source>
        <dbReference type="PROSITE-ProRule" id="PRU01348"/>
    </source>
</evidence>
<evidence type="ECO:0000256" key="3">
    <source>
        <dbReference type="SAM" id="MobiDB-lite"/>
    </source>
</evidence>
<evidence type="ECO:0000269" key="4">
    <source>
    </source>
</evidence>
<evidence type="ECO:0000269" key="5">
    <source>
    </source>
</evidence>
<evidence type="ECO:0000269" key="6">
    <source>
    </source>
</evidence>
<evidence type="ECO:0000269" key="7">
    <source>
    </source>
</evidence>
<evidence type="ECO:0000269" key="8">
    <source>
    </source>
</evidence>
<evidence type="ECO:0000269" key="9">
    <source>
    </source>
</evidence>
<evidence type="ECO:0000269" key="10">
    <source>
    </source>
</evidence>
<evidence type="ECO:0000269" key="11">
    <source>
    </source>
</evidence>
<evidence type="ECO:0000269" key="12">
    <source>
    </source>
</evidence>
<evidence type="ECO:0000305" key="13"/>
<evidence type="ECO:0000305" key="14">
    <source>
    </source>
</evidence>
<evidence type="ECO:0000305" key="15">
    <source>
    </source>
</evidence>
<evidence type="ECO:0000305" key="16">
    <source>
    </source>
</evidence>
<evidence type="ECO:0000312" key="17">
    <source>
        <dbReference type="EMBL" id="CCP46629.1"/>
    </source>
</evidence>
<evidence type="ECO:0007744" key="18">
    <source>
        <dbReference type="PDB" id="3TZW"/>
    </source>
</evidence>
<evidence type="ECO:0007744" key="19">
    <source>
        <dbReference type="PDB" id="3TZX"/>
    </source>
</evidence>
<evidence type="ECO:0007744" key="20">
    <source>
        <dbReference type="PDB" id="3TZY"/>
    </source>
</evidence>
<evidence type="ECO:0007744" key="21">
    <source>
        <dbReference type="PDB" id="3TZZ"/>
    </source>
</evidence>
<evidence type="ECO:0007744" key="22">
    <source>
        <dbReference type="PDB" id="5V3W"/>
    </source>
</evidence>
<evidence type="ECO:0007744" key="23">
    <source>
        <dbReference type="PDB" id="5V3X"/>
    </source>
</evidence>
<evidence type="ECO:0007744" key="24">
    <source>
        <dbReference type="PDB" id="5V3Y"/>
    </source>
</evidence>
<evidence type="ECO:0007744" key="25">
    <source>
        <dbReference type="PDB" id="5V3Z"/>
    </source>
</evidence>
<evidence type="ECO:0007744" key="26">
    <source>
        <dbReference type="PDB" id="5V40"/>
    </source>
</evidence>
<evidence type="ECO:0007744" key="27">
    <source>
        <dbReference type="PDB" id="5V41"/>
    </source>
</evidence>
<evidence type="ECO:0007744" key="28">
    <source>
        <dbReference type="PDB" id="5V42"/>
    </source>
</evidence>
<evidence type="ECO:0007744" key="29">
    <source>
        <dbReference type="PDB" id="5XUO"/>
    </source>
</evidence>
<evidence type="ECO:0007744" key="30">
    <source>
        <dbReference type="PDB" id="6C4Q"/>
    </source>
</evidence>
<evidence type="ECO:0007744" key="31">
    <source>
        <dbReference type="PDB" id="6C4V"/>
    </source>
</evidence>
<evidence type="ECO:0007744" key="32">
    <source>
        <dbReference type="PDB" id="6D8I"/>
    </source>
</evidence>
<evidence type="ECO:0007744" key="33">
    <source>
        <dbReference type="PDB" id="6D8J"/>
    </source>
</evidence>
<evidence type="ECO:0007829" key="34">
    <source>
        <dbReference type="PDB" id="5V3W"/>
    </source>
</evidence>
<evidence type="ECO:0007829" key="35">
    <source>
        <dbReference type="PDB" id="5XUO"/>
    </source>
</evidence>
<evidence type="ECO:0007829" key="36">
    <source>
        <dbReference type="PDB" id="6C4Q"/>
    </source>
</evidence>
<evidence type="ECO:0007829" key="37">
    <source>
        <dbReference type="PDB" id="6C4V"/>
    </source>
</evidence>
<evidence type="ECO:0007829" key="38">
    <source>
        <dbReference type="PDB" id="7VJT"/>
    </source>
</evidence>
<evidence type="ECO:0007829" key="39">
    <source>
        <dbReference type="PDB" id="8Q17"/>
    </source>
</evidence>
<evidence type="ECO:0007829" key="40">
    <source>
        <dbReference type="PDB" id="9F48"/>
    </source>
</evidence>
<accession>I6X8D2</accession>